<evidence type="ECO:0000255" key="1">
    <source>
        <dbReference type="HAMAP-Rule" id="MF_01864"/>
    </source>
</evidence>
<evidence type="ECO:0000255" key="2">
    <source>
        <dbReference type="PROSITE-ProRule" id="PRU01266"/>
    </source>
</evidence>
<evidence type="ECO:0000256" key="3">
    <source>
        <dbReference type="SAM" id="MobiDB-lite"/>
    </source>
</evidence>
<protein>
    <recommendedName>
        <fullName evidence="1">tRNA-2-methylthio-N(6)-dimethylallyladenosine synthase</fullName>
        <ecNumber evidence="1">2.8.4.3</ecNumber>
    </recommendedName>
    <alternativeName>
        <fullName evidence="1">(Dimethylallyl)adenosine tRNA methylthiotransferase MiaB</fullName>
    </alternativeName>
    <alternativeName>
        <fullName evidence="1">tRNA-i(6)A37 methylthiotransferase</fullName>
    </alternativeName>
</protein>
<reference key="1">
    <citation type="submission" date="2008-10" db="EMBL/GenBank/DDBJ databases">
        <title>Genome sequence of Bacillus cereus B4264.</title>
        <authorList>
            <person name="Dodson R.J."/>
            <person name="Durkin A.S."/>
            <person name="Rosovitz M.J."/>
            <person name="Rasko D.A."/>
            <person name="Hoffmaster A."/>
            <person name="Ravel J."/>
            <person name="Sutton G."/>
        </authorList>
    </citation>
    <scope>NUCLEOTIDE SEQUENCE [LARGE SCALE GENOMIC DNA]</scope>
    <source>
        <strain>B4264</strain>
    </source>
</reference>
<proteinExistence type="inferred from homology"/>
<keyword id="KW-0004">4Fe-4S</keyword>
<keyword id="KW-0963">Cytoplasm</keyword>
<keyword id="KW-0408">Iron</keyword>
<keyword id="KW-0411">Iron-sulfur</keyword>
<keyword id="KW-0479">Metal-binding</keyword>
<keyword id="KW-0949">S-adenosyl-L-methionine</keyword>
<keyword id="KW-0808">Transferase</keyword>
<keyword id="KW-0819">tRNA processing</keyword>
<sequence length="509" mass="58350">MNEQQRLASQQANSSTKKEEKDYSKYFENVYQPPSLKDAKKRGKEEVKIERDFGLPEEFRNFGTGRKFYIRTYGCQMNEHDTEVMAGIFTALGYEPTFSTEDADVVLLNTCAIRENAENKVFGELGHLKSLKRRNPDLLIGVCGCMSQEESVVNKIMQKNQHVDMVFGTHNIHRLPYILKDAMFSKETVVEVWSKEGDVIENLPKVRRGDIKAWVNIMYGCDKFCTYCIVPYTRGKERSRRPEDIIQEIRHLAANGYKEITLLGQNVNAYGKDFEDIEYGLGDLMDELRKVDIARIRFTTSHPRDFDDHLIEVLGKGGNLVEHIHLPVQSGSTDMLKIMARKYSREHYLELVRKIKEAIPDVVLTTDIIVGFPNETDEQFEETMSLYREVGFDTAFTFIYSPREGTPAAKMKDNVPMEVKKERLQRLNTLVNTLAIEKNSRYKGQIVEVLVDGESKNNPEVLAGYTRTNKLVNFVASKSLIGQLVKVKITEAKTWSLNGELVEEPIEVK</sequence>
<feature type="chain" id="PRO_0000374129" description="tRNA-2-methylthio-N(6)-dimethylallyladenosine synthase">
    <location>
        <begin position="1"/>
        <end position="509"/>
    </location>
</feature>
<feature type="domain" description="MTTase N-terminal" evidence="1">
    <location>
        <begin position="66"/>
        <end position="184"/>
    </location>
</feature>
<feature type="domain" description="Radical SAM core" evidence="2">
    <location>
        <begin position="207"/>
        <end position="437"/>
    </location>
</feature>
<feature type="domain" description="TRAM" evidence="1">
    <location>
        <begin position="440"/>
        <end position="503"/>
    </location>
</feature>
<feature type="region of interest" description="Disordered" evidence="3">
    <location>
        <begin position="1"/>
        <end position="25"/>
    </location>
</feature>
<feature type="compositionally biased region" description="Polar residues" evidence="3">
    <location>
        <begin position="1"/>
        <end position="15"/>
    </location>
</feature>
<feature type="compositionally biased region" description="Basic and acidic residues" evidence="3">
    <location>
        <begin position="16"/>
        <end position="25"/>
    </location>
</feature>
<feature type="binding site" evidence="1">
    <location>
        <position position="75"/>
    </location>
    <ligand>
        <name>[4Fe-4S] cluster</name>
        <dbReference type="ChEBI" id="CHEBI:49883"/>
        <label>1</label>
    </ligand>
</feature>
<feature type="binding site" evidence="1">
    <location>
        <position position="111"/>
    </location>
    <ligand>
        <name>[4Fe-4S] cluster</name>
        <dbReference type="ChEBI" id="CHEBI:49883"/>
        <label>1</label>
    </ligand>
</feature>
<feature type="binding site" evidence="1">
    <location>
        <position position="145"/>
    </location>
    <ligand>
        <name>[4Fe-4S] cluster</name>
        <dbReference type="ChEBI" id="CHEBI:49883"/>
        <label>1</label>
    </ligand>
</feature>
<feature type="binding site" evidence="1">
    <location>
        <position position="221"/>
    </location>
    <ligand>
        <name>[4Fe-4S] cluster</name>
        <dbReference type="ChEBI" id="CHEBI:49883"/>
        <label>2</label>
        <note>4Fe-4S-S-AdoMet</note>
    </ligand>
</feature>
<feature type="binding site" evidence="1">
    <location>
        <position position="225"/>
    </location>
    <ligand>
        <name>[4Fe-4S] cluster</name>
        <dbReference type="ChEBI" id="CHEBI:49883"/>
        <label>2</label>
        <note>4Fe-4S-S-AdoMet</note>
    </ligand>
</feature>
<feature type="binding site" evidence="1">
    <location>
        <position position="228"/>
    </location>
    <ligand>
        <name>[4Fe-4S] cluster</name>
        <dbReference type="ChEBI" id="CHEBI:49883"/>
        <label>2</label>
        <note>4Fe-4S-S-AdoMet</note>
    </ligand>
</feature>
<name>MIAB_BACC4</name>
<dbReference type="EC" id="2.8.4.3" evidence="1"/>
<dbReference type="EMBL" id="CP001176">
    <property type="protein sequence ID" value="ACK62482.1"/>
    <property type="molecule type" value="Genomic_DNA"/>
</dbReference>
<dbReference type="RefSeq" id="WP_001005379.1">
    <property type="nucleotide sequence ID" value="NC_011725.1"/>
</dbReference>
<dbReference type="SMR" id="B7HDP7"/>
<dbReference type="KEGG" id="bcb:BCB4264_A3871"/>
<dbReference type="HOGENOM" id="CLU_018697_2_0_9"/>
<dbReference type="Proteomes" id="UP000007096">
    <property type="component" value="Chromosome"/>
</dbReference>
<dbReference type="GO" id="GO:0005829">
    <property type="term" value="C:cytosol"/>
    <property type="evidence" value="ECO:0007669"/>
    <property type="project" value="TreeGrafter"/>
</dbReference>
<dbReference type="GO" id="GO:0051539">
    <property type="term" value="F:4 iron, 4 sulfur cluster binding"/>
    <property type="evidence" value="ECO:0007669"/>
    <property type="project" value="UniProtKB-UniRule"/>
</dbReference>
<dbReference type="GO" id="GO:0046872">
    <property type="term" value="F:metal ion binding"/>
    <property type="evidence" value="ECO:0007669"/>
    <property type="project" value="UniProtKB-KW"/>
</dbReference>
<dbReference type="GO" id="GO:0035597">
    <property type="term" value="F:N6-isopentenyladenosine methylthiotransferase activity"/>
    <property type="evidence" value="ECO:0007669"/>
    <property type="project" value="TreeGrafter"/>
</dbReference>
<dbReference type="CDD" id="cd01335">
    <property type="entry name" value="Radical_SAM"/>
    <property type="match status" value="1"/>
</dbReference>
<dbReference type="FunFam" id="3.40.50.12160:FF:000006">
    <property type="entry name" value="tRNA-2-methylthio-N(6)-dimethylallyladenosine synthase"/>
    <property type="match status" value="1"/>
</dbReference>
<dbReference type="FunFam" id="3.80.30.20:FF:000001">
    <property type="entry name" value="tRNA-2-methylthio-N(6)-dimethylallyladenosine synthase 2"/>
    <property type="match status" value="1"/>
</dbReference>
<dbReference type="Gene3D" id="3.40.50.12160">
    <property type="entry name" value="Methylthiotransferase, N-terminal domain"/>
    <property type="match status" value="1"/>
</dbReference>
<dbReference type="Gene3D" id="3.80.30.20">
    <property type="entry name" value="tm_1862 like domain"/>
    <property type="match status" value="1"/>
</dbReference>
<dbReference type="HAMAP" id="MF_01864">
    <property type="entry name" value="tRNA_metthiotr_MiaB"/>
    <property type="match status" value="1"/>
</dbReference>
<dbReference type="InterPro" id="IPR006638">
    <property type="entry name" value="Elp3/MiaA/NifB-like_rSAM"/>
</dbReference>
<dbReference type="InterPro" id="IPR005839">
    <property type="entry name" value="Methylthiotransferase"/>
</dbReference>
<dbReference type="InterPro" id="IPR020612">
    <property type="entry name" value="Methylthiotransferase_CS"/>
</dbReference>
<dbReference type="InterPro" id="IPR013848">
    <property type="entry name" value="Methylthiotransferase_N"/>
</dbReference>
<dbReference type="InterPro" id="IPR038135">
    <property type="entry name" value="Methylthiotransferase_N_sf"/>
</dbReference>
<dbReference type="InterPro" id="IPR006463">
    <property type="entry name" value="MiaB_methiolase"/>
</dbReference>
<dbReference type="InterPro" id="IPR007197">
    <property type="entry name" value="rSAM"/>
</dbReference>
<dbReference type="InterPro" id="IPR023404">
    <property type="entry name" value="rSAM_horseshoe"/>
</dbReference>
<dbReference type="InterPro" id="IPR002792">
    <property type="entry name" value="TRAM_dom"/>
</dbReference>
<dbReference type="NCBIfam" id="TIGR01574">
    <property type="entry name" value="miaB-methiolase"/>
    <property type="match status" value="1"/>
</dbReference>
<dbReference type="NCBIfam" id="TIGR00089">
    <property type="entry name" value="MiaB/RimO family radical SAM methylthiotransferase"/>
    <property type="match status" value="1"/>
</dbReference>
<dbReference type="PANTHER" id="PTHR43020">
    <property type="entry name" value="CDK5 REGULATORY SUBUNIT-ASSOCIATED PROTEIN 1"/>
    <property type="match status" value="1"/>
</dbReference>
<dbReference type="PANTHER" id="PTHR43020:SF2">
    <property type="entry name" value="MITOCHONDRIAL TRNA METHYLTHIOTRANSFERASE CDK5RAP1"/>
    <property type="match status" value="1"/>
</dbReference>
<dbReference type="Pfam" id="PF04055">
    <property type="entry name" value="Radical_SAM"/>
    <property type="match status" value="1"/>
</dbReference>
<dbReference type="Pfam" id="PF01938">
    <property type="entry name" value="TRAM"/>
    <property type="match status" value="1"/>
</dbReference>
<dbReference type="Pfam" id="PF00919">
    <property type="entry name" value="UPF0004"/>
    <property type="match status" value="1"/>
</dbReference>
<dbReference type="SFLD" id="SFLDF00273">
    <property type="entry name" value="(dimethylallyl)adenosine_tRNA"/>
    <property type="match status" value="1"/>
</dbReference>
<dbReference type="SFLD" id="SFLDG01082">
    <property type="entry name" value="B12-binding_domain_containing"/>
    <property type="match status" value="1"/>
</dbReference>
<dbReference type="SFLD" id="SFLDS00029">
    <property type="entry name" value="Radical_SAM"/>
    <property type="match status" value="1"/>
</dbReference>
<dbReference type="SMART" id="SM00729">
    <property type="entry name" value="Elp3"/>
    <property type="match status" value="1"/>
</dbReference>
<dbReference type="SUPFAM" id="SSF102114">
    <property type="entry name" value="Radical SAM enzymes"/>
    <property type="match status" value="1"/>
</dbReference>
<dbReference type="PROSITE" id="PS51449">
    <property type="entry name" value="MTTASE_N"/>
    <property type="match status" value="1"/>
</dbReference>
<dbReference type="PROSITE" id="PS01278">
    <property type="entry name" value="MTTASE_RADICAL"/>
    <property type="match status" value="1"/>
</dbReference>
<dbReference type="PROSITE" id="PS51918">
    <property type="entry name" value="RADICAL_SAM"/>
    <property type="match status" value="1"/>
</dbReference>
<dbReference type="PROSITE" id="PS50926">
    <property type="entry name" value="TRAM"/>
    <property type="match status" value="1"/>
</dbReference>
<organism>
    <name type="scientific">Bacillus cereus (strain B4264)</name>
    <dbReference type="NCBI Taxonomy" id="405532"/>
    <lineage>
        <taxon>Bacteria</taxon>
        <taxon>Bacillati</taxon>
        <taxon>Bacillota</taxon>
        <taxon>Bacilli</taxon>
        <taxon>Bacillales</taxon>
        <taxon>Bacillaceae</taxon>
        <taxon>Bacillus</taxon>
        <taxon>Bacillus cereus group</taxon>
    </lineage>
</organism>
<accession>B7HDP7</accession>
<comment type="function">
    <text evidence="1">Catalyzes the methylthiolation of N6-(dimethylallyl)adenosine (i(6)A), leading to the formation of 2-methylthio-N6-(dimethylallyl)adenosine (ms(2)i(6)A) at position 37 in tRNAs that read codons beginning with uridine.</text>
</comment>
<comment type="catalytic activity">
    <reaction evidence="1">
        <text>N(6)-dimethylallyladenosine(37) in tRNA + (sulfur carrier)-SH + AH2 + 2 S-adenosyl-L-methionine = 2-methylsulfanyl-N(6)-dimethylallyladenosine(37) in tRNA + (sulfur carrier)-H + 5'-deoxyadenosine + L-methionine + A + S-adenosyl-L-homocysteine + 2 H(+)</text>
        <dbReference type="Rhea" id="RHEA:37067"/>
        <dbReference type="Rhea" id="RHEA-COMP:10375"/>
        <dbReference type="Rhea" id="RHEA-COMP:10376"/>
        <dbReference type="Rhea" id="RHEA-COMP:14737"/>
        <dbReference type="Rhea" id="RHEA-COMP:14739"/>
        <dbReference type="ChEBI" id="CHEBI:13193"/>
        <dbReference type="ChEBI" id="CHEBI:15378"/>
        <dbReference type="ChEBI" id="CHEBI:17319"/>
        <dbReference type="ChEBI" id="CHEBI:17499"/>
        <dbReference type="ChEBI" id="CHEBI:29917"/>
        <dbReference type="ChEBI" id="CHEBI:57844"/>
        <dbReference type="ChEBI" id="CHEBI:57856"/>
        <dbReference type="ChEBI" id="CHEBI:59789"/>
        <dbReference type="ChEBI" id="CHEBI:64428"/>
        <dbReference type="ChEBI" id="CHEBI:74415"/>
        <dbReference type="ChEBI" id="CHEBI:74417"/>
        <dbReference type="EC" id="2.8.4.3"/>
    </reaction>
</comment>
<comment type="cofactor">
    <cofactor evidence="1">
        <name>[4Fe-4S] cluster</name>
        <dbReference type="ChEBI" id="CHEBI:49883"/>
    </cofactor>
    <text evidence="1">Binds 2 [4Fe-4S] clusters. One cluster is coordinated with 3 cysteines and an exchangeable S-adenosyl-L-methionine.</text>
</comment>
<comment type="subunit">
    <text evidence="1">Monomer.</text>
</comment>
<comment type="subcellular location">
    <subcellularLocation>
        <location evidence="1">Cytoplasm</location>
    </subcellularLocation>
</comment>
<comment type="similarity">
    <text evidence="1">Belongs to the methylthiotransferase family. MiaB subfamily.</text>
</comment>
<gene>
    <name evidence="1" type="primary">miaB</name>
    <name type="ordered locus">BCB4264_A3871</name>
</gene>